<keyword id="KW-0274">FAD</keyword>
<keyword id="KW-0285">Flavoprotein</keyword>
<keyword id="KW-0521">NADP</keyword>
<keyword id="KW-0560">Oxidoreductase</keyword>
<proteinExistence type="inferred from homology"/>
<reference key="1">
    <citation type="journal article" date="2001" name="Science">
        <title>Comparative genomics of Listeria species.</title>
        <authorList>
            <person name="Glaser P."/>
            <person name="Frangeul L."/>
            <person name="Buchrieser C."/>
            <person name="Rusniok C."/>
            <person name="Amend A."/>
            <person name="Baquero F."/>
            <person name="Berche P."/>
            <person name="Bloecker H."/>
            <person name="Brandt P."/>
            <person name="Chakraborty T."/>
            <person name="Charbit A."/>
            <person name="Chetouani F."/>
            <person name="Couve E."/>
            <person name="de Daruvar A."/>
            <person name="Dehoux P."/>
            <person name="Domann E."/>
            <person name="Dominguez-Bernal G."/>
            <person name="Duchaud E."/>
            <person name="Durant L."/>
            <person name="Dussurget O."/>
            <person name="Entian K.-D."/>
            <person name="Fsihi H."/>
            <person name="Garcia-del Portillo F."/>
            <person name="Garrido P."/>
            <person name="Gautier L."/>
            <person name="Goebel W."/>
            <person name="Gomez-Lopez N."/>
            <person name="Hain T."/>
            <person name="Hauf J."/>
            <person name="Jackson D."/>
            <person name="Jones L.-M."/>
            <person name="Kaerst U."/>
            <person name="Kreft J."/>
            <person name="Kuhn M."/>
            <person name="Kunst F."/>
            <person name="Kurapkat G."/>
            <person name="Madueno E."/>
            <person name="Maitournam A."/>
            <person name="Mata Vicente J."/>
            <person name="Ng E."/>
            <person name="Nedjari H."/>
            <person name="Nordsiek G."/>
            <person name="Novella S."/>
            <person name="de Pablos B."/>
            <person name="Perez-Diaz J.-C."/>
            <person name="Purcell R."/>
            <person name="Remmel B."/>
            <person name="Rose M."/>
            <person name="Schlueter T."/>
            <person name="Simoes N."/>
            <person name="Tierrez A."/>
            <person name="Vazquez-Boland J.-A."/>
            <person name="Voss H."/>
            <person name="Wehland J."/>
            <person name="Cossart P."/>
        </authorList>
    </citation>
    <scope>NUCLEOTIDE SEQUENCE [LARGE SCALE GENOMIC DNA]</scope>
    <source>
        <strain>ATCC BAA-680 / CLIP 11262</strain>
    </source>
</reference>
<name>FENR2_LISIN</name>
<comment type="catalytic activity">
    <reaction evidence="1">
        <text>2 reduced [2Fe-2S]-[ferredoxin] + NADP(+) + H(+) = 2 oxidized [2Fe-2S]-[ferredoxin] + NADPH</text>
        <dbReference type="Rhea" id="RHEA:20125"/>
        <dbReference type="Rhea" id="RHEA-COMP:10000"/>
        <dbReference type="Rhea" id="RHEA-COMP:10001"/>
        <dbReference type="ChEBI" id="CHEBI:15378"/>
        <dbReference type="ChEBI" id="CHEBI:33737"/>
        <dbReference type="ChEBI" id="CHEBI:33738"/>
        <dbReference type="ChEBI" id="CHEBI:57783"/>
        <dbReference type="ChEBI" id="CHEBI:58349"/>
        <dbReference type="EC" id="1.18.1.2"/>
    </reaction>
</comment>
<comment type="cofactor">
    <cofactor evidence="1">
        <name>FAD</name>
        <dbReference type="ChEBI" id="CHEBI:57692"/>
    </cofactor>
    <text evidence="1">Binds 1 FAD per subunit.</text>
</comment>
<comment type="subunit">
    <text evidence="1">Homodimer.</text>
</comment>
<comment type="similarity">
    <text evidence="1">Belongs to the ferredoxin--NADP reductase type 2 family.</text>
</comment>
<sequence>MDEKTKIYDITIIGGGPVGLFAAFYAGMRNASVKIIESLPQLGGQLSTLYPEKYIYDIPGYPSVRAQELVNNLIQQMKPFDPTVALEEAVQSVEKQVDGTFEIITKKDTHYSKAIIITAGNGAFEPRRLDLPEAEQYEGKNIHYFINDLSRFSGRRVAVCGGGDSAVDWALMLEKVASSVSIVHRRNAFRAHEHSVNNLEKSSIAIKTPFIPTEVLGNGDKLTHITLQEVKGDTTETLEIDDFIINYGFVSSLGPIKNWGLELERNSIIVNSKMETNIPGIYCAGDICTYDGKVKLIATGFGEAPTAVNNAMNFIDPKTRVQPMHSTSLFE</sequence>
<evidence type="ECO:0000255" key="1">
    <source>
        <dbReference type="HAMAP-Rule" id="MF_01685"/>
    </source>
</evidence>
<dbReference type="EC" id="1.18.1.2" evidence="1"/>
<dbReference type="EMBL" id="AL596172">
    <property type="protein sequence ID" value="CAC97716.1"/>
    <property type="molecule type" value="Genomic_DNA"/>
</dbReference>
<dbReference type="PIR" id="AD1743">
    <property type="entry name" value="AD1743"/>
</dbReference>
<dbReference type="RefSeq" id="WP_003763767.1">
    <property type="nucleotide sequence ID" value="NC_003212.1"/>
</dbReference>
<dbReference type="SMR" id="Q928P3"/>
<dbReference type="STRING" id="272626.gene:17566869"/>
<dbReference type="GeneID" id="93235799"/>
<dbReference type="KEGG" id="lin:lin2489"/>
<dbReference type="eggNOG" id="COG0492">
    <property type="taxonomic scope" value="Bacteria"/>
</dbReference>
<dbReference type="HOGENOM" id="CLU_031864_5_5_9"/>
<dbReference type="OrthoDB" id="9806179at2"/>
<dbReference type="Proteomes" id="UP000002513">
    <property type="component" value="Chromosome"/>
</dbReference>
<dbReference type="GO" id="GO:0004324">
    <property type="term" value="F:ferredoxin-NADP+ reductase activity"/>
    <property type="evidence" value="ECO:0007669"/>
    <property type="project" value="UniProtKB-UniRule"/>
</dbReference>
<dbReference type="GO" id="GO:0050660">
    <property type="term" value="F:flavin adenine dinucleotide binding"/>
    <property type="evidence" value="ECO:0007669"/>
    <property type="project" value="UniProtKB-UniRule"/>
</dbReference>
<dbReference type="GO" id="GO:0050661">
    <property type="term" value="F:NADP binding"/>
    <property type="evidence" value="ECO:0007669"/>
    <property type="project" value="UniProtKB-UniRule"/>
</dbReference>
<dbReference type="Gene3D" id="3.50.50.60">
    <property type="entry name" value="FAD/NAD(P)-binding domain"/>
    <property type="match status" value="2"/>
</dbReference>
<dbReference type="HAMAP" id="MF_01685">
    <property type="entry name" value="FENR2"/>
    <property type="match status" value="1"/>
</dbReference>
<dbReference type="InterPro" id="IPR036188">
    <property type="entry name" value="FAD/NAD-bd_sf"/>
</dbReference>
<dbReference type="InterPro" id="IPR023753">
    <property type="entry name" value="FAD/NAD-binding_dom"/>
</dbReference>
<dbReference type="InterPro" id="IPR022890">
    <property type="entry name" value="Fd--NADP_Rdtase_type_2"/>
</dbReference>
<dbReference type="InterPro" id="IPR050097">
    <property type="entry name" value="Ferredoxin-NADP_redctase_2"/>
</dbReference>
<dbReference type="PANTHER" id="PTHR48105">
    <property type="entry name" value="THIOREDOXIN REDUCTASE 1-RELATED-RELATED"/>
    <property type="match status" value="1"/>
</dbReference>
<dbReference type="Pfam" id="PF07992">
    <property type="entry name" value="Pyr_redox_2"/>
    <property type="match status" value="1"/>
</dbReference>
<dbReference type="PRINTS" id="PR00368">
    <property type="entry name" value="FADPNR"/>
</dbReference>
<dbReference type="PRINTS" id="PR00469">
    <property type="entry name" value="PNDRDTASEII"/>
</dbReference>
<dbReference type="SUPFAM" id="SSF51905">
    <property type="entry name" value="FAD/NAD(P)-binding domain"/>
    <property type="match status" value="1"/>
</dbReference>
<feature type="chain" id="PRO_0000364870" description="Ferredoxin--NADP reductase 2">
    <location>
        <begin position="1"/>
        <end position="331"/>
    </location>
</feature>
<feature type="binding site" evidence="1">
    <location>
        <position position="37"/>
    </location>
    <ligand>
        <name>FAD</name>
        <dbReference type="ChEBI" id="CHEBI:57692"/>
    </ligand>
</feature>
<feature type="binding site" evidence="1">
    <location>
        <position position="45"/>
    </location>
    <ligand>
        <name>FAD</name>
        <dbReference type="ChEBI" id="CHEBI:57692"/>
    </ligand>
</feature>
<feature type="binding site" evidence="1">
    <location>
        <position position="50"/>
    </location>
    <ligand>
        <name>FAD</name>
        <dbReference type="ChEBI" id="CHEBI:57692"/>
    </ligand>
</feature>
<feature type="binding site" evidence="1">
    <location>
        <position position="90"/>
    </location>
    <ligand>
        <name>FAD</name>
        <dbReference type="ChEBI" id="CHEBI:57692"/>
    </ligand>
</feature>
<feature type="binding site" evidence="1">
    <location>
        <position position="124"/>
    </location>
    <ligand>
        <name>FAD</name>
        <dbReference type="ChEBI" id="CHEBI:57692"/>
    </ligand>
</feature>
<feature type="binding site" evidence="1">
    <location>
        <position position="286"/>
    </location>
    <ligand>
        <name>FAD</name>
        <dbReference type="ChEBI" id="CHEBI:57692"/>
    </ligand>
</feature>
<feature type="binding site" evidence="1">
    <location>
        <position position="327"/>
    </location>
    <ligand>
        <name>FAD</name>
        <dbReference type="ChEBI" id="CHEBI:57692"/>
    </ligand>
</feature>
<protein>
    <recommendedName>
        <fullName evidence="1">Ferredoxin--NADP reductase 2</fullName>
        <shortName evidence="1">FNR 2</shortName>
        <shortName evidence="1">Fd-NADP(+) reductase 2</shortName>
        <ecNumber evidence="1">1.18.1.2</ecNumber>
    </recommendedName>
</protein>
<accession>Q928P3</accession>
<organism>
    <name type="scientific">Listeria innocua serovar 6a (strain ATCC BAA-680 / CLIP 11262)</name>
    <dbReference type="NCBI Taxonomy" id="272626"/>
    <lineage>
        <taxon>Bacteria</taxon>
        <taxon>Bacillati</taxon>
        <taxon>Bacillota</taxon>
        <taxon>Bacilli</taxon>
        <taxon>Bacillales</taxon>
        <taxon>Listeriaceae</taxon>
        <taxon>Listeria</taxon>
    </lineage>
</organism>
<gene>
    <name type="ordered locus">lin2489</name>
</gene>